<reference key="1">
    <citation type="journal article" date="2007" name="Proc. Natl. Acad. Sci. U.S.A.">
        <title>The Orientia tsutsugamushi genome reveals massive proliferation of conjugative type IV secretion system and host-cell interaction genes.</title>
        <authorList>
            <person name="Cho N.-H."/>
            <person name="Kim H.-R."/>
            <person name="Lee J.-H."/>
            <person name="Kim S.-Y."/>
            <person name="Kim J."/>
            <person name="Cha S."/>
            <person name="Kim S.-Y."/>
            <person name="Darby A.C."/>
            <person name="Fuxelius H.-H."/>
            <person name="Yin J."/>
            <person name="Kim J.H."/>
            <person name="Kim J."/>
            <person name="Lee S.J."/>
            <person name="Koh Y.-S."/>
            <person name="Jang W.-J."/>
            <person name="Park K.-H."/>
            <person name="Andersson S.G.E."/>
            <person name="Choi M.-S."/>
            <person name="Kim I.-S."/>
        </authorList>
    </citation>
    <scope>NUCLEOTIDE SEQUENCE [LARGE SCALE GENOMIC DNA]</scope>
    <source>
        <strain>Boryong</strain>
    </source>
</reference>
<keyword id="KW-0627">Porphyrin biosynthesis</keyword>
<keyword id="KW-1185">Reference proteome</keyword>
<keyword id="KW-0808">Transferase</keyword>
<name>HEM3_ORITB</name>
<gene>
    <name evidence="1" type="primary">hemC</name>
    <name type="ordered locus">OTBS_0843</name>
</gene>
<sequence>MIIRVGSRASRLALIQAQAVVQKINDLLGLNAIIIPIKTTGDLIQNKNLYDIGGKGLFLKEIEYALLNNTIDIAVHSLKDVPAYLPDGLQLAAVLERGDVGDMLVSKIANKITDLPLGAIVGTSSVRRRIQLLMLRPDLNIVLFRGNVDTRWNKIINNEVDATVLAAAGLQRLNYDTSRFCNIIPQSEMLPAIGQGAIAIEARKDDKLIMPLCAKINHQLTWQLIQVERGYLKTLNADCNVPIGGIASYIGNNSFEAKFMLGDYNMRYFFYSEVRGKLQHGYDIGVEAAKNFQKRLFI</sequence>
<accession>A5CDH4</accession>
<comment type="function">
    <text evidence="1">Tetrapolymerization of the monopyrrole PBG into the hydroxymethylbilane pre-uroporphyrinogen in several discrete steps.</text>
</comment>
<comment type="catalytic activity">
    <reaction evidence="1">
        <text>4 porphobilinogen + H2O = hydroxymethylbilane + 4 NH4(+)</text>
        <dbReference type="Rhea" id="RHEA:13185"/>
        <dbReference type="ChEBI" id="CHEBI:15377"/>
        <dbReference type="ChEBI" id="CHEBI:28938"/>
        <dbReference type="ChEBI" id="CHEBI:57845"/>
        <dbReference type="ChEBI" id="CHEBI:58126"/>
        <dbReference type="EC" id="2.5.1.61"/>
    </reaction>
</comment>
<comment type="cofactor">
    <cofactor evidence="1">
        <name>dipyrromethane</name>
        <dbReference type="ChEBI" id="CHEBI:60342"/>
    </cofactor>
    <text evidence="1">Binds 1 dipyrromethane group covalently.</text>
</comment>
<comment type="pathway">
    <text evidence="1">Porphyrin-containing compound metabolism; protoporphyrin-IX biosynthesis; coproporphyrinogen-III from 5-aminolevulinate: step 2/4.</text>
</comment>
<comment type="subunit">
    <text evidence="1">Monomer.</text>
</comment>
<comment type="miscellaneous">
    <text evidence="1">The porphobilinogen subunits are added to the dipyrromethane group.</text>
</comment>
<comment type="similarity">
    <text evidence="1">Belongs to the HMBS family.</text>
</comment>
<feature type="chain" id="PRO_1000059102" description="Porphobilinogen deaminase">
    <location>
        <begin position="1"/>
        <end position="298"/>
    </location>
</feature>
<feature type="modified residue" description="S-(dipyrrolylmethanemethyl)cysteine" evidence="1">
    <location>
        <position position="239"/>
    </location>
</feature>
<protein>
    <recommendedName>
        <fullName evidence="1">Porphobilinogen deaminase</fullName>
        <shortName evidence="1">PBG</shortName>
        <ecNumber evidence="1">2.5.1.61</ecNumber>
    </recommendedName>
    <alternativeName>
        <fullName evidence="1">Hydroxymethylbilane synthase</fullName>
        <shortName evidence="1">HMBS</shortName>
    </alternativeName>
    <alternativeName>
        <fullName evidence="1">Pre-uroporphyrinogen synthase</fullName>
    </alternativeName>
</protein>
<proteinExistence type="inferred from homology"/>
<evidence type="ECO:0000255" key="1">
    <source>
        <dbReference type="HAMAP-Rule" id="MF_00260"/>
    </source>
</evidence>
<dbReference type="EC" id="2.5.1.61" evidence="1"/>
<dbReference type="EMBL" id="AM494475">
    <property type="protein sequence ID" value="CAM79909.1"/>
    <property type="molecule type" value="Genomic_DNA"/>
</dbReference>
<dbReference type="RefSeq" id="WP_011944674.1">
    <property type="nucleotide sequence ID" value="NC_009488.1"/>
</dbReference>
<dbReference type="SMR" id="A5CDH4"/>
<dbReference type="KEGG" id="ots:OTBS_0843"/>
<dbReference type="eggNOG" id="COG0181">
    <property type="taxonomic scope" value="Bacteria"/>
</dbReference>
<dbReference type="HOGENOM" id="CLU_019704_0_2_5"/>
<dbReference type="UniPathway" id="UPA00251">
    <property type="reaction ID" value="UER00319"/>
</dbReference>
<dbReference type="Proteomes" id="UP000001565">
    <property type="component" value="Chromosome"/>
</dbReference>
<dbReference type="GO" id="GO:0005737">
    <property type="term" value="C:cytoplasm"/>
    <property type="evidence" value="ECO:0007669"/>
    <property type="project" value="TreeGrafter"/>
</dbReference>
<dbReference type="GO" id="GO:0004418">
    <property type="term" value="F:hydroxymethylbilane synthase activity"/>
    <property type="evidence" value="ECO:0007669"/>
    <property type="project" value="UniProtKB-UniRule"/>
</dbReference>
<dbReference type="GO" id="GO:0006782">
    <property type="term" value="P:protoporphyrinogen IX biosynthetic process"/>
    <property type="evidence" value="ECO:0007669"/>
    <property type="project" value="UniProtKB-UniRule"/>
</dbReference>
<dbReference type="FunFam" id="3.40.190.10:FF:000005">
    <property type="entry name" value="Porphobilinogen deaminase"/>
    <property type="match status" value="1"/>
</dbReference>
<dbReference type="Gene3D" id="3.40.190.10">
    <property type="entry name" value="Periplasmic binding protein-like II"/>
    <property type="match status" value="2"/>
</dbReference>
<dbReference type="Gene3D" id="3.30.160.40">
    <property type="entry name" value="Porphobilinogen deaminase, C-terminal domain"/>
    <property type="match status" value="1"/>
</dbReference>
<dbReference type="HAMAP" id="MF_00260">
    <property type="entry name" value="Porphobil_deam"/>
    <property type="match status" value="1"/>
</dbReference>
<dbReference type="InterPro" id="IPR000860">
    <property type="entry name" value="HemC"/>
</dbReference>
<dbReference type="InterPro" id="IPR022417">
    <property type="entry name" value="Porphobilin_deaminase_N"/>
</dbReference>
<dbReference type="InterPro" id="IPR022418">
    <property type="entry name" value="Porphobilinogen_deaminase_C"/>
</dbReference>
<dbReference type="InterPro" id="IPR036803">
    <property type="entry name" value="Porphobilinogen_deaminase_C_sf"/>
</dbReference>
<dbReference type="NCBIfam" id="TIGR00212">
    <property type="entry name" value="hemC"/>
    <property type="match status" value="1"/>
</dbReference>
<dbReference type="PANTHER" id="PTHR11557">
    <property type="entry name" value="PORPHOBILINOGEN DEAMINASE"/>
    <property type="match status" value="1"/>
</dbReference>
<dbReference type="PANTHER" id="PTHR11557:SF0">
    <property type="entry name" value="PORPHOBILINOGEN DEAMINASE"/>
    <property type="match status" value="1"/>
</dbReference>
<dbReference type="Pfam" id="PF01379">
    <property type="entry name" value="Porphobil_deam"/>
    <property type="match status" value="1"/>
</dbReference>
<dbReference type="Pfam" id="PF03900">
    <property type="entry name" value="Porphobil_deamC"/>
    <property type="match status" value="1"/>
</dbReference>
<dbReference type="PIRSF" id="PIRSF001438">
    <property type="entry name" value="4pyrrol_synth_OHMeBilane_synth"/>
    <property type="match status" value="1"/>
</dbReference>
<dbReference type="PRINTS" id="PR00151">
    <property type="entry name" value="PORPHBDMNASE"/>
</dbReference>
<dbReference type="SUPFAM" id="SSF53850">
    <property type="entry name" value="Periplasmic binding protein-like II"/>
    <property type="match status" value="1"/>
</dbReference>
<dbReference type="SUPFAM" id="SSF54782">
    <property type="entry name" value="Porphobilinogen deaminase (hydroxymethylbilane synthase), C-terminal domain"/>
    <property type="match status" value="1"/>
</dbReference>
<organism>
    <name type="scientific">Orientia tsutsugamushi (strain Boryong)</name>
    <name type="common">Rickettsia tsutsugamushi</name>
    <dbReference type="NCBI Taxonomy" id="357244"/>
    <lineage>
        <taxon>Bacteria</taxon>
        <taxon>Pseudomonadati</taxon>
        <taxon>Pseudomonadota</taxon>
        <taxon>Alphaproteobacteria</taxon>
        <taxon>Rickettsiales</taxon>
        <taxon>Rickettsiaceae</taxon>
        <taxon>Rickettsieae</taxon>
        <taxon>Orientia</taxon>
    </lineage>
</organism>